<organism>
    <name type="scientific">Rattus norvegicus</name>
    <name type="common">Rat</name>
    <dbReference type="NCBI Taxonomy" id="10116"/>
    <lineage>
        <taxon>Eukaryota</taxon>
        <taxon>Metazoa</taxon>
        <taxon>Chordata</taxon>
        <taxon>Craniata</taxon>
        <taxon>Vertebrata</taxon>
        <taxon>Euteleostomi</taxon>
        <taxon>Mammalia</taxon>
        <taxon>Eutheria</taxon>
        <taxon>Euarchontoglires</taxon>
        <taxon>Glires</taxon>
        <taxon>Rodentia</taxon>
        <taxon>Myomorpha</taxon>
        <taxon>Muroidea</taxon>
        <taxon>Muridae</taxon>
        <taxon>Murinae</taxon>
        <taxon>Rattus</taxon>
    </lineage>
</organism>
<feature type="chain" id="PRO_0000342278" description="Tuftelin-interacting protein 11">
    <location>
        <begin position="1"/>
        <end position="837"/>
    </location>
</feature>
<feature type="domain" description="G-patch" evidence="3">
    <location>
        <begin position="149"/>
        <end position="195"/>
    </location>
</feature>
<feature type="region of interest" description="Required for interaction with DHX15" evidence="1">
    <location>
        <begin position="1"/>
        <end position="50"/>
    </location>
</feature>
<feature type="region of interest" description="Disordered" evidence="4">
    <location>
        <begin position="1"/>
        <end position="21"/>
    </location>
</feature>
<feature type="region of interest" description="Disordered" evidence="4">
    <location>
        <begin position="34"/>
        <end position="73"/>
    </location>
</feature>
<feature type="region of interest" description="Disordered" evidence="4">
    <location>
        <begin position="85"/>
        <end position="135"/>
    </location>
</feature>
<feature type="region of interest" description="Disordered" evidence="4">
    <location>
        <begin position="183"/>
        <end position="236"/>
    </location>
</feature>
<feature type="region of interest" description="Required for nuclear speckle localization" evidence="1">
    <location>
        <begin position="710"/>
        <end position="734"/>
    </location>
</feature>
<feature type="short sequence motif" description="Nuclear localization signal" evidence="1">
    <location>
        <begin position="700"/>
        <end position="705"/>
    </location>
</feature>
<feature type="compositionally biased region" description="Basic and acidic residues" evidence="4">
    <location>
        <begin position="1"/>
        <end position="13"/>
    </location>
</feature>
<feature type="compositionally biased region" description="Basic and acidic residues" evidence="4">
    <location>
        <begin position="44"/>
        <end position="64"/>
    </location>
</feature>
<feature type="compositionally biased region" description="Acidic residues" evidence="4">
    <location>
        <begin position="91"/>
        <end position="100"/>
    </location>
</feature>
<feature type="compositionally biased region" description="Basic and acidic residues" evidence="4">
    <location>
        <begin position="101"/>
        <end position="116"/>
    </location>
</feature>
<feature type="compositionally biased region" description="Basic and acidic residues" evidence="4">
    <location>
        <begin position="217"/>
        <end position="231"/>
    </location>
</feature>
<feature type="modified residue" description="Phosphoserine" evidence="6">
    <location>
        <position position="2"/>
    </location>
</feature>
<feature type="modified residue" description="Phosphoserine" evidence="2">
    <location>
        <position position="59"/>
    </location>
</feature>
<feature type="modified residue" description="Phosphoserine" evidence="6">
    <location>
        <position position="95"/>
    </location>
</feature>
<feature type="modified residue" description="Phosphoserine" evidence="6">
    <location>
        <position position="98"/>
    </location>
</feature>
<feature type="modified residue" description="Phosphoserine" evidence="2">
    <location>
        <position position="144"/>
    </location>
</feature>
<feature type="modified residue" description="Phosphoserine" evidence="6">
    <location>
        <position position="210"/>
    </location>
</feature>
<protein>
    <recommendedName>
        <fullName>Tuftelin-interacting protein 11</fullName>
    </recommendedName>
    <alternativeName>
        <fullName>Septin and tuftelin-interacting protein 1</fullName>
        <shortName>STIP-1</shortName>
    </alternativeName>
</protein>
<keyword id="KW-0091">Biomineralization</keyword>
<keyword id="KW-0963">Cytoplasm</keyword>
<keyword id="KW-0507">mRNA processing</keyword>
<keyword id="KW-0508">mRNA splicing</keyword>
<keyword id="KW-0539">Nucleus</keyword>
<keyword id="KW-0597">Phosphoprotein</keyword>
<keyword id="KW-1185">Reference proteome</keyword>
<keyword id="KW-0747">Spliceosome</keyword>
<accession>Q5U2Y6</accession>
<gene>
    <name type="primary">Tfip11</name>
    <name type="synonym">Stip</name>
</gene>
<proteinExistence type="evidence at protein level"/>
<dbReference type="EMBL" id="DQ342031">
    <property type="protein sequence ID" value="ABC69923.1"/>
    <property type="molecule type" value="mRNA"/>
</dbReference>
<dbReference type="EMBL" id="BC085809">
    <property type="protein sequence ID" value="AAH85809.1"/>
    <property type="molecule type" value="mRNA"/>
</dbReference>
<dbReference type="RefSeq" id="NP_001008292.1">
    <property type="nucleotide sequence ID" value="NM_001008291.1"/>
</dbReference>
<dbReference type="RefSeq" id="XP_063127286.1">
    <property type="nucleotide sequence ID" value="XM_063271216.1"/>
</dbReference>
<dbReference type="SMR" id="Q5U2Y6"/>
<dbReference type="FunCoup" id="Q5U2Y6">
    <property type="interactions" value="3479"/>
</dbReference>
<dbReference type="IntAct" id="Q5U2Y6">
    <property type="interactions" value="1"/>
</dbReference>
<dbReference type="STRING" id="10116.ENSRNOP00000000828"/>
<dbReference type="iPTMnet" id="Q5U2Y6"/>
<dbReference type="PhosphoSitePlus" id="Q5U2Y6"/>
<dbReference type="jPOST" id="Q5U2Y6"/>
<dbReference type="PaxDb" id="10116-ENSRNOP00000000828"/>
<dbReference type="Ensembl" id="ENSRNOT00000000828.5">
    <property type="protein sequence ID" value="ENSRNOP00000000828.3"/>
    <property type="gene ID" value="ENSRNOG00000000663.5"/>
</dbReference>
<dbReference type="GeneID" id="288718"/>
<dbReference type="KEGG" id="rno:288718"/>
<dbReference type="AGR" id="RGD:1311449"/>
<dbReference type="CTD" id="24144"/>
<dbReference type="RGD" id="1311449">
    <property type="gene designation" value="Tfip11"/>
</dbReference>
<dbReference type="eggNOG" id="KOG2184">
    <property type="taxonomic scope" value="Eukaryota"/>
</dbReference>
<dbReference type="GeneTree" id="ENSGT00390000012739"/>
<dbReference type="HOGENOM" id="CLU_007977_1_1_1"/>
<dbReference type="InParanoid" id="Q5U2Y6"/>
<dbReference type="OMA" id="CEQDIIQ"/>
<dbReference type="OrthoDB" id="33218at9989"/>
<dbReference type="PhylomeDB" id="Q5U2Y6"/>
<dbReference type="TreeFam" id="TF314887"/>
<dbReference type="PRO" id="PR:Q5U2Y6"/>
<dbReference type="Proteomes" id="UP000002494">
    <property type="component" value="Chromosome 12"/>
</dbReference>
<dbReference type="Bgee" id="ENSRNOG00000000663">
    <property type="expression patterns" value="Expressed in testis and 19 other cell types or tissues"/>
</dbReference>
<dbReference type="GO" id="GO:0071013">
    <property type="term" value="C:catalytic step 2 spliceosome"/>
    <property type="evidence" value="ECO:0000266"/>
    <property type="project" value="RGD"/>
</dbReference>
<dbReference type="GO" id="GO:0000781">
    <property type="term" value="C:chromosome, telomeric region"/>
    <property type="evidence" value="ECO:0000266"/>
    <property type="project" value="RGD"/>
</dbReference>
<dbReference type="GO" id="GO:0005737">
    <property type="term" value="C:cytoplasm"/>
    <property type="evidence" value="ECO:0007669"/>
    <property type="project" value="UniProtKB-SubCell"/>
</dbReference>
<dbReference type="GO" id="GO:0031012">
    <property type="term" value="C:extracellular matrix"/>
    <property type="evidence" value="ECO:0000266"/>
    <property type="project" value="RGD"/>
</dbReference>
<dbReference type="GO" id="GO:0016607">
    <property type="term" value="C:nuclear speck"/>
    <property type="evidence" value="ECO:0007669"/>
    <property type="project" value="Ensembl"/>
</dbReference>
<dbReference type="GO" id="GO:0005730">
    <property type="term" value="C:nucleolus"/>
    <property type="evidence" value="ECO:0000266"/>
    <property type="project" value="RGD"/>
</dbReference>
<dbReference type="GO" id="GO:0005681">
    <property type="term" value="C:spliceosomal complex"/>
    <property type="evidence" value="ECO:0000250"/>
    <property type="project" value="UniProtKB"/>
</dbReference>
<dbReference type="GO" id="GO:0071008">
    <property type="term" value="C:U2-type post-mRNA release spliceosomal complex"/>
    <property type="evidence" value="ECO:0000250"/>
    <property type="project" value="UniProtKB"/>
</dbReference>
<dbReference type="GO" id="GO:0003676">
    <property type="term" value="F:nucleic acid binding"/>
    <property type="evidence" value="ECO:0007669"/>
    <property type="project" value="InterPro"/>
</dbReference>
<dbReference type="GO" id="GO:0031214">
    <property type="term" value="P:biomineral tissue development"/>
    <property type="evidence" value="ECO:0007669"/>
    <property type="project" value="UniProtKB-KW"/>
</dbReference>
<dbReference type="GO" id="GO:0031333">
    <property type="term" value="P:negative regulation of protein-containing complex assembly"/>
    <property type="evidence" value="ECO:0000266"/>
    <property type="project" value="RGD"/>
</dbReference>
<dbReference type="GO" id="GO:0000390">
    <property type="term" value="P:spliceosomal complex disassembly"/>
    <property type="evidence" value="ECO:0000250"/>
    <property type="project" value="UniProtKB"/>
</dbReference>
<dbReference type="InterPro" id="IPR000467">
    <property type="entry name" value="G_patch_dom"/>
</dbReference>
<dbReference type="InterPro" id="IPR022783">
    <property type="entry name" value="GCFC_dom"/>
</dbReference>
<dbReference type="InterPro" id="IPR022159">
    <property type="entry name" value="STIP/TFIP11_N"/>
</dbReference>
<dbReference type="InterPro" id="IPR024933">
    <property type="entry name" value="TFP11"/>
</dbReference>
<dbReference type="InterPro" id="IPR045211">
    <property type="entry name" value="TFP11/STIP/Ntr1"/>
</dbReference>
<dbReference type="PANTHER" id="PTHR23329:SF1">
    <property type="entry name" value="TUFTELIN-INTERACTING PROTEIN 11"/>
    <property type="match status" value="1"/>
</dbReference>
<dbReference type="PANTHER" id="PTHR23329">
    <property type="entry name" value="TUFTELIN-INTERACTING PROTEIN 11-RELATED"/>
    <property type="match status" value="1"/>
</dbReference>
<dbReference type="Pfam" id="PF01585">
    <property type="entry name" value="G-patch"/>
    <property type="match status" value="1"/>
</dbReference>
<dbReference type="Pfam" id="PF07842">
    <property type="entry name" value="GCFC"/>
    <property type="match status" value="1"/>
</dbReference>
<dbReference type="Pfam" id="PF12457">
    <property type="entry name" value="TIP_N"/>
    <property type="match status" value="1"/>
</dbReference>
<dbReference type="PIRSF" id="PIRSF017706">
    <property type="entry name" value="TFIP11"/>
    <property type="match status" value="1"/>
</dbReference>
<dbReference type="SMART" id="SM00443">
    <property type="entry name" value="G_patch"/>
    <property type="match status" value="1"/>
</dbReference>
<dbReference type="PROSITE" id="PS50174">
    <property type="entry name" value="G_PATCH"/>
    <property type="match status" value="1"/>
</dbReference>
<evidence type="ECO:0000250" key="1"/>
<evidence type="ECO:0000250" key="2">
    <source>
        <dbReference type="UniProtKB" id="Q9UBB9"/>
    </source>
</evidence>
<evidence type="ECO:0000255" key="3">
    <source>
        <dbReference type="PROSITE-ProRule" id="PRU00092"/>
    </source>
</evidence>
<evidence type="ECO:0000256" key="4">
    <source>
        <dbReference type="SAM" id="MobiDB-lite"/>
    </source>
</evidence>
<evidence type="ECO:0000305" key="5"/>
<evidence type="ECO:0007744" key="6">
    <source>
    </source>
</evidence>
<comment type="function">
    <text evidence="1">Involved in pre-mRNA splicing, specifically in spliceosome disassembly during late-stage splicing events. Intron turnover seems to proceed through reactions in two lariat-intron associated complexes termed Intron Large (IL) and Intron Small (IS). In cooperation with DHX15 seems to mediate the transition of the U2, U5 and U6 snRNP-containing IL complex to the snRNP-free IS complex leading to efficient debranching and turnover of excised introns. May play a role in the differentiation of ameloblasts and odontoblasts or in the forming of the enamel extracellular matrix (By similarity).</text>
</comment>
<comment type="subunit">
    <text evidence="1">Identified in the spliceosome C complex. Found in the Intron Large (IL) complex, a post-mRNA release spliceosomal complex containing the excised intron, U2, U5 and U6 snRNPs, and splicing factors. Interacts with TUFT1. Interacts with DHX15; indicative for a recruitment of DHX15 to the IL complex. Interacts with GCFC2 (By similarity).</text>
</comment>
<comment type="subcellular location">
    <subcellularLocation>
        <location evidence="1">Cytoplasm</location>
    </subcellularLocation>
    <subcellularLocation>
        <location evidence="1">Nucleus</location>
    </subcellularLocation>
    <text evidence="1">In the nucleus localizes to unique speckle domains in close proximity to nuclear speckles and not identical to paraspeckles.</text>
</comment>
<comment type="similarity">
    <text evidence="5">Belongs to the TFP11/STIP family.</text>
</comment>
<sequence length="837" mass="96152">MSLSHLYRDGEGHLDDDDDERENFEITDWDLQNEFNPNRQRHWQTKEEATYGVWAERDSDEERPSFGGKRARDYSAPVNFISAGLKKGAAEEADSEDSDAEEKPVKQEDFPKDLGPKKLKTGGNFKPSQKGFAGGTKSFMDFGSWERHTKGIGQKLLQKMGYVPGRGLGKNAQGIINPIEAKQRKGKGAVGAYGSERTTQSLQDFPVADSEEEAEEEFQKELSQWRKDPSGSKKKPKYSYKTVEELKAKGRVSKKLTAPQKELSQVKVIDMTGREQKVYYSYSQISHKHSVPDEGVPLLAQLPPTAGKEAKVPGFALPELEHNLQLLIERTEQEIIQSDRQLQYERDMVVSLSHELEKTAEVLAHEERVISNLSKVLALVEECEHRMQPHGADPLTLDECARIFETLQDKYYEEYRLADRADLAVAIVYPLVKDYFKDWHPLEDSNYGTQIISKWKSLLENDQLLSHSSQDLSSDAFHRLMWEVWMPFVRNVVAQWQPRNCEPMVDFLDSWAHIIPVWILDNILDQLIFPKLQKEVDNWNPLTDTVPIHSWIHPWLPLMQARLEPLYSPVRSKLSSALQKWHPSDASAKLILQPWKEVLTPGSWEAFMLRNIVPKLGMCLGELVINPHQQHMDAFYWVMDWEGMISVSSLVGLLEKHFFPKWLQVLCSWLSNSPNYEEITKWYLGWKSMFSDQVLAHPSVKDKFNEALDIMNRAVSSNVGAYMQPGARENIAYLTHTERRKDFQYEAMQERREAENMAQRGIGVAASSVPMNFKDLIETKAEEHNIVFMPVIGKRHEGKQLYTFGRIVIYIDRGVVFVQGEKTWVPTSLQSLIDMAK</sequence>
<name>TFP11_RAT</name>
<reference key="1">
    <citation type="journal article" date="2007" name="Exp. Cell Res.">
        <title>Characterization of STIP, a multi-domain nuclear protein, highly conserved in metazoans, and essential for embryogenesis in Caenorhabditis elegans.</title>
        <authorList>
            <person name="Ji Q."/>
            <person name="Huang C.-H."/>
            <person name="Peng J."/>
            <person name="Hashmi S."/>
            <person name="Ye T."/>
            <person name="Chen Y."/>
        </authorList>
    </citation>
    <scope>NUCLEOTIDE SEQUENCE [MRNA]</scope>
    <source>
        <strain>Sprague-Dawley</strain>
    </source>
</reference>
<reference key="2">
    <citation type="journal article" date="2004" name="Genome Res.">
        <title>The status, quality, and expansion of the NIH full-length cDNA project: the Mammalian Gene Collection (MGC).</title>
        <authorList>
            <consortium name="The MGC Project Team"/>
        </authorList>
    </citation>
    <scope>NUCLEOTIDE SEQUENCE [LARGE SCALE MRNA]</scope>
    <source>
        <tissue>Testis</tissue>
    </source>
</reference>
<reference key="3">
    <citation type="journal article" date="2012" name="Nat. Commun.">
        <title>Quantitative maps of protein phosphorylation sites across 14 different rat organs and tissues.</title>
        <authorList>
            <person name="Lundby A."/>
            <person name="Secher A."/>
            <person name="Lage K."/>
            <person name="Nordsborg N.B."/>
            <person name="Dmytriyev A."/>
            <person name="Lundby C."/>
            <person name="Olsen J.V."/>
        </authorList>
    </citation>
    <scope>PHOSPHORYLATION [LARGE SCALE ANALYSIS] AT SER-2; SER-95; SER-98 AND SER-210</scope>
    <scope>IDENTIFICATION BY MASS SPECTROMETRY [LARGE SCALE ANALYSIS]</scope>
</reference>